<dbReference type="EMBL" id="CP000489">
    <property type="protein sequence ID" value="ABL69934.1"/>
    <property type="molecule type" value="Genomic_DNA"/>
</dbReference>
<dbReference type="RefSeq" id="WP_011748131.1">
    <property type="nucleotide sequence ID" value="NC_008686.1"/>
</dbReference>
<dbReference type="STRING" id="318586.Pden_1837"/>
<dbReference type="EnsemblBacteria" id="ABL69934">
    <property type="protein sequence ID" value="ABL69934"/>
    <property type="gene ID" value="Pden_1837"/>
</dbReference>
<dbReference type="GeneID" id="93450233"/>
<dbReference type="KEGG" id="pde:Pden_1837"/>
<dbReference type="eggNOG" id="COG1742">
    <property type="taxonomic scope" value="Bacteria"/>
</dbReference>
<dbReference type="HOGENOM" id="CLU_117653_1_0_5"/>
<dbReference type="OrthoDB" id="123240at2"/>
<dbReference type="Proteomes" id="UP000000361">
    <property type="component" value="Chromosome 1"/>
</dbReference>
<dbReference type="GO" id="GO:0005886">
    <property type="term" value="C:plasma membrane"/>
    <property type="evidence" value="ECO:0007669"/>
    <property type="project" value="UniProtKB-SubCell"/>
</dbReference>
<dbReference type="HAMAP" id="MF_00010">
    <property type="entry name" value="UPF0060"/>
    <property type="match status" value="1"/>
</dbReference>
<dbReference type="InterPro" id="IPR003844">
    <property type="entry name" value="UPF0060"/>
</dbReference>
<dbReference type="NCBIfam" id="NF002586">
    <property type="entry name" value="PRK02237.1"/>
    <property type="match status" value="1"/>
</dbReference>
<dbReference type="PANTHER" id="PTHR36116">
    <property type="entry name" value="UPF0060 MEMBRANE PROTEIN YNFA"/>
    <property type="match status" value="1"/>
</dbReference>
<dbReference type="PANTHER" id="PTHR36116:SF1">
    <property type="entry name" value="UPF0060 MEMBRANE PROTEIN YNFA"/>
    <property type="match status" value="1"/>
</dbReference>
<dbReference type="Pfam" id="PF02694">
    <property type="entry name" value="UPF0060"/>
    <property type="match status" value="1"/>
</dbReference>
<dbReference type="SUPFAM" id="SSF103481">
    <property type="entry name" value="Multidrug resistance efflux transporter EmrE"/>
    <property type="match status" value="1"/>
</dbReference>
<sequence>MTLAAPIAVYVLAALAEIAGCFAFWAWLRLGKSPLWLVPGMVSLAVFAWLLTRVDADFAGRAYAAYGGIYVTASLGWLWLTEGQVPTRWDILGGGLCVLGAMVILAGPRAA</sequence>
<evidence type="ECO:0000255" key="1">
    <source>
        <dbReference type="HAMAP-Rule" id="MF_00010"/>
    </source>
</evidence>
<gene>
    <name type="ordered locus">Pden_1837</name>
</gene>
<keyword id="KW-0997">Cell inner membrane</keyword>
<keyword id="KW-1003">Cell membrane</keyword>
<keyword id="KW-0472">Membrane</keyword>
<keyword id="KW-1185">Reference proteome</keyword>
<keyword id="KW-0812">Transmembrane</keyword>
<keyword id="KW-1133">Transmembrane helix</keyword>
<accession>A1B340</accession>
<protein>
    <recommendedName>
        <fullName evidence="1">UPF0060 membrane protein Pden_1837</fullName>
    </recommendedName>
</protein>
<proteinExistence type="inferred from homology"/>
<name>Y1837_PARDP</name>
<reference key="1">
    <citation type="submission" date="2006-12" db="EMBL/GenBank/DDBJ databases">
        <title>Complete sequence of chromosome 1 of Paracoccus denitrificans PD1222.</title>
        <authorList>
            <person name="Copeland A."/>
            <person name="Lucas S."/>
            <person name="Lapidus A."/>
            <person name="Barry K."/>
            <person name="Detter J.C."/>
            <person name="Glavina del Rio T."/>
            <person name="Hammon N."/>
            <person name="Israni S."/>
            <person name="Dalin E."/>
            <person name="Tice H."/>
            <person name="Pitluck S."/>
            <person name="Munk A.C."/>
            <person name="Brettin T."/>
            <person name="Bruce D."/>
            <person name="Han C."/>
            <person name="Tapia R."/>
            <person name="Gilna P."/>
            <person name="Schmutz J."/>
            <person name="Larimer F."/>
            <person name="Land M."/>
            <person name="Hauser L."/>
            <person name="Kyrpides N."/>
            <person name="Lykidis A."/>
            <person name="Spiro S."/>
            <person name="Richardson D.J."/>
            <person name="Moir J.W.B."/>
            <person name="Ferguson S.J."/>
            <person name="van Spanning R.J.M."/>
            <person name="Richardson P."/>
        </authorList>
    </citation>
    <scope>NUCLEOTIDE SEQUENCE [LARGE SCALE GENOMIC DNA]</scope>
    <source>
        <strain>Pd 1222</strain>
    </source>
</reference>
<comment type="subcellular location">
    <subcellularLocation>
        <location evidence="1">Cell inner membrane</location>
        <topology evidence="1">Multi-pass membrane protein</topology>
    </subcellularLocation>
</comment>
<comment type="similarity">
    <text evidence="1">Belongs to the UPF0060 family.</text>
</comment>
<organism>
    <name type="scientific">Paracoccus denitrificans (strain Pd 1222)</name>
    <dbReference type="NCBI Taxonomy" id="318586"/>
    <lineage>
        <taxon>Bacteria</taxon>
        <taxon>Pseudomonadati</taxon>
        <taxon>Pseudomonadota</taxon>
        <taxon>Alphaproteobacteria</taxon>
        <taxon>Rhodobacterales</taxon>
        <taxon>Paracoccaceae</taxon>
        <taxon>Paracoccus</taxon>
    </lineage>
</organism>
<feature type="chain" id="PRO_5000182650" description="UPF0060 membrane protein Pden_1837">
    <location>
        <begin position="1"/>
        <end position="111"/>
    </location>
</feature>
<feature type="transmembrane region" description="Helical" evidence="1">
    <location>
        <begin position="7"/>
        <end position="27"/>
    </location>
</feature>
<feature type="transmembrane region" description="Helical" evidence="1">
    <location>
        <begin position="30"/>
        <end position="50"/>
    </location>
</feature>
<feature type="transmembrane region" description="Helical" evidence="1">
    <location>
        <begin position="62"/>
        <end position="82"/>
    </location>
</feature>
<feature type="transmembrane region" description="Helical" evidence="1">
    <location>
        <begin position="91"/>
        <end position="111"/>
    </location>
</feature>